<organism>
    <name type="scientific">Pseudomonas fluorescens (strain Pf0-1)</name>
    <dbReference type="NCBI Taxonomy" id="205922"/>
    <lineage>
        <taxon>Bacteria</taxon>
        <taxon>Pseudomonadati</taxon>
        <taxon>Pseudomonadota</taxon>
        <taxon>Gammaproteobacteria</taxon>
        <taxon>Pseudomonadales</taxon>
        <taxon>Pseudomonadaceae</taxon>
        <taxon>Pseudomonas</taxon>
    </lineage>
</organism>
<comment type="function">
    <text evidence="2">One of the essential components for the initiation of protein synthesis. Protects formylmethionyl-tRNA from spontaneous hydrolysis and promotes its binding to the 30S ribosomal subunits. Also involved in the hydrolysis of GTP during the formation of the 70S ribosomal complex.</text>
</comment>
<comment type="subcellular location">
    <subcellularLocation>
        <location evidence="2">Cytoplasm</location>
    </subcellularLocation>
</comment>
<comment type="similarity">
    <text evidence="2">Belongs to the TRAFAC class translation factor GTPase superfamily. Classic translation factor GTPase family. IF-2 subfamily.</text>
</comment>
<feature type="chain" id="PRO_0000228230" description="Translation initiation factor IF-2">
    <location>
        <begin position="1"/>
        <end position="837"/>
    </location>
</feature>
<feature type="domain" description="tr-type G">
    <location>
        <begin position="337"/>
        <end position="506"/>
    </location>
</feature>
<feature type="region of interest" description="Disordered" evidence="3">
    <location>
        <begin position="94"/>
        <end position="252"/>
    </location>
</feature>
<feature type="region of interest" description="G1" evidence="1">
    <location>
        <begin position="346"/>
        <end position="353"/>
    </location>
</feature>
<feature type="region of interest" description="G2" evidence="1">
    <location>
        <begin position="371"/>
        <end position="375"/>
    </location>
</feature>
<feature type="region of interest" description="G3" evidence="1">
    <location>
        <begin position="392"/>
        <end position="395"/>
    </location>
</feature>
<feature type="region of interest" description="G4" evidence="1">
    <location>
        <begin position="446"/>
        <end position="449"/>
    </location>
</feature>
<feature type="region of interest" description="G5" evidence="1">
    <location>
        <begin position="482"/>
        <end position="484"/>
    </location>
</feature>
<feature type="compositionally biased region" description="Basic and acidic residues" evidence="3">
    <location>
        <begin position="96"/>
        <end position="136"/>
    </location>
</feature>
<feature type="compositionally biased region" description="Low complexity" evidence="3">
    <location>
        <begin position="137"/>
        <end position="171"/>
    </location>
</feature>
<feature type="compositionally biased region" description="Basic and acidic residues" evidence="3">
    <location>
        <begin position="172"/>
        <end position="213"/>
    </location>
</feature>
<feature type="compositionally biased region" description="Basic and acidic residues" evidence="3">
    <location>
        <begin position="221"/>
        <end position="230"/>
    </location>
</feature>
<feature type="compositionally biased region" description="Basic residues" evidence="3">
    <location>
        <begin position="231"/>
        <end position="244"/>
    </location>
</feature>
<feature type="binding site" evidence="2">
    <location>
        <begin position="346"/>
        <end position="353"/>
    </location>
    <ligand>
        <name>GTP</name>
        <dbReference type="ChEBI" id="CHEBI:37565"/>
    </ligand>
</feature>
<feature type="binding site" evidence="2">
    <location>
        <begin position="392"/>
        <end position="396"/>
    </location>
    <ligand>
        <name>GTP</name>
        <dbReference type="ChEBI" id="CHEBI:37565"/>
    </ligand>
</feature>
<feature type="binding site" evidence="2">
    <location>
        <begin position="446"/>
        <end position="449"/>
    </location>
    <ligand>
        <name>GTP</name>
        <dbReference type="ChEBI" id="CHEBI:37565"/>
    </ligand>
</feature>
<accession>Q3KI84</accession>
<keyword id="KW-0963">Cytoplasm</keyword>
<keyword id="KW-0342">GTP-binding</keyword>
<keyword id="KW-0396">Initiation factor</keyword>
<keyword id="KW-0547">Nucleotide-binding</keyword>
<keyword id="KW-0648">Protein biosynthesis</keyword>
<reference key="1">
    <citation type="journal article" date="2009" name="Genome Biol.">
        <title>Genomic and genetic analyses of diversity and plant interactions of Pseudomonas fluorescens.</title>
        <authorList>
            <person name="Silby M.W."/>
            <person name="Cerdeno-Tarraga A.M."/>
            <person name="Vernikos G.S."/>
            <person name="Giddens S.R."/>
            <person name="Jackson R.W."/>
            <person name="Preston G.M."/>
            <person name="Zhang X.-X."/>
            <person name="Moon C.D."/>
            <person name="Gehrig S.M."/>
            <person name="Godfrey S.A.C."/>
            <person name="Knight C.G."/>
            <person name="Malone J.G."/>
            <person name="Robinson Z."/>
            <person name="Spiers A.J."/>
            <person name="Harris S."/>
            <person name="Challis G.L."/>
            <person name="Yaxley A.M."/>
            <person name="Harris D."/>
            <person name="Seeger K."/>
            <person name="Murphy L."/>
            <person name="Rutter S."/>
            <person name="Squares R."/>
            <person name="Quail M.A."/>
            <person name="Saunders E."/>
            <person name="Mavromatis K."/>
            <person name="Brettin T.S."/>
            <person name="Bentley S.D."/>
            <person name="Hothersall J."/>
            <person name="Stephens E."/>
            <person name="Thomas C.M."/>
            <person name="Parkhill J."/>
            <person name="Levy S.B."/>
            <person name="Rainey P.B."/>
            <person name="Thomson N.R."/>
        </authorList>
    </citation>
    <scope>NUCLEOTIDE SEQUENCE [LARGE SCALE GENOMIC DNA]</scope>
    <source>
        <strain>Pf0-1</strain>
    </source>
</reference>
<sequence length="837" mass="90304">MTQVTVKQLADEVKTPVERLLQQMREAGLPHTAAEENVTDSEKQSLLTHLKSSHKAKVEEPRKITLQRKTTSTLRVAGSKSISVEVRKKKVFVQRSPEEIEAERKRELDERRAVENAARQKAEEEARVRAEEEARRQPAAPSAPAEAVAAPAPVAEPVREAAPVVAAAPAADTRKRDEQRRPDKPRADDNNRRGGDGERKNAPHRASVKEKAPAPRVAPRTTDEESDGFRRGGRGKAKLKKRNAHGFQSPTGPVVREVKIGETITVGDLAQQMSVKAAEIIKFMFKLGTPATINQVLDQETAQLVAEELGHKVTLVSDTALEDSLAESLKFEGEAVPRAPVVTVMGHVDHGKTSLLDYIRRAKVAAGEAGGITQHIGAYHVETERGMVTFLDTPGHAAFTAMRARGAKATDIVILVVAADDGVMPQTIEAVQHAVAAGVPLVVAVNKIDKPGADLDRIRSELSAHGVTSEDWGGDTPFVPVSAKMGTGVDELLEAVLLQAEVLELTATPSAPGRGVVVESRLDKGRGPVATVLVQDGTLRQGDMVLVGSNYGRVRAMLDENGKPIKEAGPAIPVEILGLDGTPDAGDEMSVVADEKKAREVALFRQGKFREVKLARAHAGKLENIFESMGQEEKKTLNIVLKSDVRGSLEALQGALNGLGNDEVQVRVVGGGVGGITESDANLALASNAVLFGFNVRADAGARKIVEQEGLDMRYYNVIYDIIEDVKKALTGMLGSDVRENILGVAEVRDVFRSPKFGAIAGCMVIEGTVHRNRPIRVLREDIVIFEGELESLRRFKDDASEVRAGMECGIGVKSYNDVKVGDKIEVFEKVQVARSL</sequence>
<gene>
    <name evidence="2" type="primary">infB</name>
    <name type="ordered locus">Pfl01_0779</name>
</gene>
<name>IF2_PSEPF</name>
<proteinExistence type="inferred from homology"/>
<dbReference type="EMBL" id="CP000094">
    <property type="protein sequence ID" value="ABA72522.1"/>
    <property type="molecule type" value="Genomic_DNA"/>
</dbReference>
<dbReference type="RefSeq" id="WP_011332408.1">
    <property type="nucleotide sequence ID" value="NC_007492.2"/>
</dbReference>
<dbReference type="SMR" id="Q3KI84"/>
<dbReference type="KEGG" id="pfo:Pfl01_0779"/>
<dbReference type="eggNOG" id="COG0532">
    <property type="taxonomic scope" value="Bacteria"/>
</dbReference>
<dbReference type="HOGENOM" id="CLU_006301_6_3_6"/>
<dbReference type="Proteomes" id="UP000002704">
    <property type="component" value="Chromosome"/>
</dbReference>
<dbReference type="GO" id="GO:0005829">
    <property type="term" value="C:cytosol"/>
    <property type="evidence" value="ECO:0007669"/>
    <property type="project" value="TreeGrafter"/>
</dbReference>
<dbReference type="GO" id="GO:0005525">
    <property type="term" value="F:GTP binding"/>
    <property type="evidence" value="ECO:0007669"/>
    <property type="project" value="UniProtKB-KW"/>
</dbReference>
<dbReference type="GO" id="GO:0003924">
    <property type="term" value="F:GTPase activity"/>
    <property type="evidence" value="ECO:0007669"/>
    <property type="project" value="UniProtKB-UniRule"/>
</dbReference>
<dbReference type="GO" id="GO:0003743">
    <property type="term" value="F:translation initiation factor activity"/>
    <property type="evidence" value="ECO:0007669"/>
    <property type="project" value="UniProtKB-UniRule"/>
</dbReference>
<dbReference type="CDD" id="cd01887">
    <property type="entry name" value="IF2_eIF5B"/>
    <property type="match status" value="1"/>
</dbReference>
<dbReference type="CDD" id="cd03702">
    <property type="entry name" value="IF2_mtIF2_II"/>
    <property type="match status" value="1"/>
</dbReference>
<dbReference type="CDD" id="cd03692">
    <property type="entry name" value="mtIF2_IVc"/>
    <property type="match status" value="1"/>
</dbReference>
<dbReference type="FunFam" id="2.40.30.10:FF:000007">
    <property type="entry name" value="Translation initiation factor IF-2"/>
    <property type="match status" value="1"/>
</dbReference>
<dbReference type="FunFam" id="2.40.30.10:FF:000008">
    <property type="entry name" value="Translation initiation factor IF-2"/>
    <property type="match status" value="1"/>
</dbReference>
<dbReference type="FunFam" id="3.40.50.10050:FF:000001">
    <property type="entry name" value="Translation initiation factor IF-2"/>
    <property type="match status" value="1"/>
</dbReference>
<dbReference type="FunFam" id="3.40.50.300:FF:000019">
    <property type="entry name" value="Translation initiation factor IF-2"/>
    <property type="match status" value="1"/>
</dbReference>
<dbReference type="Gene3D" id="3.40.50.300">
    <property type="entry name" value="P-loop containing nucleotide triphosphate hydrolases"/>
    <property type="match status" value="1"/>
</dbReference>
<dbReference type="Gene3D" id="3.30.56.50">
    <property type="entry name" value="Putative DNA-binding domain, N-terminal subdomain of bacterial translation initiation factor IF2"/>
    <property type="match status" value="1"/>
</dbReference>
<dbReference type="Gene3D" id="2.40.30.10">
    <property type="entry name" value="Translation factors"/>
    <property type="match status" value="2"/>
</dbReference>
<dbReference type="Gene3D" id="3.40.50.10050">
    <property type="entry name" value="Translation initiation factor IF- 2, domain 3"/>
    <property type="match status" value="1"/>
</dbReference>
<dbReference type="HAMAP" id="MF_00100_B">
    <property type="entry name" value="IF_2_B"/>
    <property type="match status" value="1"/>
</dbReference>
<dbReference type="InterPro" id="IPR009061">
    <property type="entry name" value="DNA-bd_dom_put_sf"/>
</dbReference>
<dbReference type="InterPro" id="IPR053905">
    <property type="entry name" value="EF-G-like_DII"/>
</dbReference>
<dbReference type="InterPro" id="IPR013575">
    <property type="entry name" value="IF2_assoc_dom_bac"/>
</dbReference>
<dbReference type="InterPro" id="IPR044145">
    <property type="entry name" value="IF2_II"/>
</dbReference>
<dbReference type="InterPro" id="IPR006847">
    <property type="entry name" value="IF2_N"/>
</dbReference>
<dbReference type="InterPro" id="IPR027417">
    <property type="entry name" value="P-loop_NTPase"/>
</dbReference>
<dbReference type="InterPro" id="IPR005225">
    <property type="entry name" value="Small_GTP-bd"/>
</dbReference>
<dbReference type="InterPro" id="IPR000795">
    <property type="entry name" value="T_Tr_GTP-bd_dom"/>
</dbReference>
<dbReference type="InterPro" id="IPR000178">
    <property type="entry name" value="TF_IF2_bacterial-like"/>
</dbReference>
<dbReference type="InterPro" id="IPR015760">
    <property type="entry name" value="TIF_IF2"/>
</dbReference>
<dbReference type="InterPro" id="IPR023115">
    <property type="entry name" value="TIF_IF2_dom3"/>
</dbReference>
<dbReference type="InterPro" id="IPR036925">
    <property type="entry name" value="TIF_IF2_dom3_sf"/>
</dbReference>
<dbReference type="InterPro" id="IPR009000">
    <property type="entry name" value="Transl_B-barrel_sf"/>
</dbReference>
<dbReference type="NCBIfam" id="TIGR00487">
    <property type="entry name" value="IF-2"/>
    <property type="match status" value="1"/>
</dbReference>
<dbReference type="NCBIfam" id="TIGR00231">
    <property type="entry name" value="small_GTP"/>
    <property type="match status" value="1"/>
</dbReference>
<dbReference type="PANTHER" id="PTHR43381:SF5">
    <property type="entry name" value="TR-TYPE G DOMAIN-CONTAINING PROTEIN"/>
    <property type="match status" value="1"/>
</dbReference>
<dbReference type="PANTHER" id="PTHR43381">
    <property type="entry name" value="TRANSLATION INITIATION FACTOR IF-2-RELATED"/>
    <property type="match status" value="1"/>
</dbReference>
<dbReference type="Pfam" id="PF22042">
    <property type="entry name" value="EF-G_D2"/>
    <property type="match status" value="1"/>
</dbReference>
<dbReference type="Pfam" id="PF00009">
    <property type="entry name" value="GTP_EFTU"/>
    <property type="match status" value="1"/>
</dbReference>
<dbReference type="Pfam" id="PF11987">
    <property type="entry name" value="IF-2"/>
    <property type="match status" value="1"/>
</dbReference>
<dbReference type="Pfam" id="PF08364">
    <property type="entry name" value="IF2_assoc"/>
    <property type="match status" value="1"/>
</dbReference>
<dbReference type="Pfam" id="PF04760">
    <property type="entry name" value="IF2_N"/>
    <property type="match status" value="2"/>
</dbReference>
<dbReference type="SUPFAM" id="SSF52156">
    <property type="entry name" value="Initiation factor IF2/eIF5b, domain 3"/>
    <property type="match status" value="1"/>
</dbReference>
<dbReference type="SUPFAM" id="SSF52540">
    <property type="entry name" value="P-loop containing nucleoside triphosphate hydrolases"/>
    <property type="match status" value="1"/>
</dbReference>
<dbReference type="SUPFAM" id="SSF46955">
    <property type="entry name" value="Putative DNA-binding domain"/>
    <property type="match status" value="1"/>
</dbReference>
<dbReference type="SUPFAM" id="SSF50447">
    <property type="entry name" value="Translation proteins"/>
    <property type="match status" value="2"/>
</dbReference>
<dbReference type="PROSITE" id="PS51722">
    <property type="entry name" value="G_TR_2"/>
    <property type="match status" value="1"/>
</dbReference>
<dbReference type="PROSITE" id="PS01176">
    <property type="entry name" value="IF2"/>
    <property type="match status" value="1"/>
</dbReference>
<evidence type="ECO:0000250" key="1"/>
<evidence type="ECO:0000255" key="2">
    <source>
        <dbReference type="HAMAP-Rule" id="MF_00100"/>
    </source>
</evidence>
<evidence type="ECO:0000256" key="3">
    <source>
        <dbReference type="SAM" id="MobiDB-lite"/>
    </source>
</evidence>
<protein>
    <recommendedName>
        <fullName evidence="2">Translation initiation factor IF-2</fullName>
    </recommendedName>
</protein>